<organism>
    <name type="scientific">Novosphingobium aromaticivorans (strain ATCC 700278 / DSM 12444 / CCUG 56034 / CIP 105152 / NBRC 16084 / F199)</name>
    <dbReference type="NCBI Taxonomy" id="279238"/>
    <lineage>
        <taxon>Bacteria</taxon>
        <taxon>Pseudomonadati</taxon>
        <taxon>Pseudomonadota</taxon>
        <taxon>Alphaproteobacteria</taxon>
        <taxon>Sphingomonadales</taxon>
        <taxon>Sphingomonadaceae</taxon>
        <taxon>Novosphingobium</taxon>
    </lineage>
</organism>
<evidence type="ECO:0000255" key="1">
    <source>
        <dbReference type="HAMAP-Rule" id="MF_00336"/>
    </source>
</evidence>
<proteinExistence type="inferred from homology"/>
<sequence>MTAFVVTGTDTGVGKTIFSAALTGALNAHYWKPVQAGLEDGADRDHVARLAGVPASHVLPESYRLNTPCSPHRAAELDGVVLDLARIALPDVRPLVVEGAGGALVPVTRNTTYADVFAWWNLPVVIVARTGLGTINHSLLTIEALRARGVPIHGVAFVGDAVEDSEATICAMGEVRRLGRLPMLGQLDRPALAQAFAEGFRVEDFA</sequence>
<name>BIOD_NOVAD</name>
<comment type="function">
    <text evidence="1">Catalyzes a mechanistically unusual reaction, the ATP-dependent insertion of CO2 between the N7 and N8 nitrogen atoms of 7,8-diaminopelargonic acid (DAPA, also called 7,8-diammoniononanoate) to form a ureido ring.</text>
</comment>
<comment type="catalytic activity">
    <reaction evidence="1">
        <text>(7R,8S)-7,8-diammoniononanoate + CO2 + ATP = (4R,5S)-dethiobiotin + ADP + phosphate + 3 H(+)</text>
        <dbReference type="Rhea" id="RHEA:15805"/>
        <dbReference type="ChEBI" id="CHEBI:15378"/>
        <dbReference type="ChEBI" id="CHEBI:16526"/>
        <dbReference type="ChEBI" id="CHEBI:30616"/>
        <dbReference type="ChEBI" id="CHEBI:43474"/>
        <dbReference type="ChEBI" id="CHEBI:149469"/>
        <dbReference type="ChEBI" id="CHEBI:149473"/>
        <dbReference type="ChEBI" id="CHEBI:456216"/>
        <dbReference type="EC" id="6.3.3.3"/>
    </reaction>
</comment>
<comment type="cofactor">
    <cofactor evidence="1">
        <name>Mg(2+)</name>
        <dbReference type="ChEBI" id="CHEBI:18420"/>
    </cofactor>
</comment>
<comment type="pathway">
    <text evidence="1">Cofactor biosynthesis; biotin biosynthesis; biotin from 7,8-diaminononanoate: step 1/2.</text>
</comment>
<comment type="subunit">
    <text evidence="1">Homodimer.</text>
</comment>
<comment type="subcellular location">
    <subcellularLocation>
        <location evidence="1">Cytoplasm</location>
    </subcellularLocation>
</comment>
<comment type="similarity">
    <text evidence="1">Belongs to the dethiobiotin synthetase family.</text>
</comment>
<accession>Q2GAF9</accession>
<keyword id="KW-0067">ATP-binding</keyword>
<keyword id="KW-0093">Biotin biosynthesis</keyword>
<keyword id="KW-0963">Cytoplasm</keyword>
<keyword id="KW-0436">Ligase</keyword>
<keyword id="KW-0460">Magnesium</keyword>
<keyword id="KW-0479">Metal-binding</keyword>
<keyword id="KW-0547">Nucleotide-binding</keyword>
<keyword id="KW-1185">Reference proteome</keyword>
<feature type="chain" id="PRO_1000059710" description="ATP-dependent dethiobiotin synthetase BioD">
    <location>
        <begin position="1"/>
        <end position="206"/>
    </location>
</feature>
<feature type="active site" evidence="1">
    <location>
        <position position="32"/>
    </location>
</feature>
<feature type="binding site" evidence="1">
    <location>
        <begin position="12"/>
        <end position="17"/>
    </location>
    <ligand>
        <name>ATP</name>
        <dbReference type="ChEBI" id="CHEBI:30616"/>
    </ligand>
</feature>
<feature type="binding site" evidence="1">
    <location>
        <position position="16"/>
    </location>
    <ligand>
        <name>Mg(2+)</name>
        <dbReference type="ChEBI" id="CHEBI:18420"/>
    </ligand>
</feature>
<feature type="binding site" evidence="1">
    <location>
        <position position="46"/>
    </location>
    <ligand>
        <name>Mg(2+)</name>
        <dbReference type="ChEBI" id="CHEBI:18420"/>
    </ligand>
</feature>
<feature type="binding site" evidence="1">
    <location>
        <begin position="98"/>
        <end position="101"/>
    </location>
    <ligand>
        <name>ATP</name>
        <dbReference type="ChEBI" id="CHEBI:30616"/>
    </ligand>
</feature>
<feature type="binding site" evidence="1">
    <location>
        <position position="98"/>
    </location>
    <ligand>
        <name>Mg(2+)</name>
        <dbReference type="ChEBI" id="CHEBI:18420"/>
    </ligand>
</feature>
<gene>
    <name evidence="1" type="primary">bioD</name>
    <name type="ordered locus">Saro_0717</name>
</gene>
<reference key="1">
    <citation type="submission" date="2006-01" db="EMBL/GenBank/DDBJ databases">
        <title>Complete sequence of Novosphingobium aromaticivorans DSM 12444.</title>
        <authorList>
            <consortium name="US DOE Joint Genome Institute"/>
            <person name="Copeland A."/>
            <person name="Lucas S."/>
            <person name="Lapidus A."/>
            <person name="Barry K."/>
            <person name="Detter J.C."/>
            <person name="Glavina T."/>
            <person name="Hammon N."/>
            <person name="Israni S."/>
            <person name="Pitluck S."/>
            <person name="Chain P."/>
            <person name="Malfatti S."/>
            <person name="Shin M."/>
            <person name="Vergez L."/>
            <person name="Schmutz J."/>
            <person name="Larimer F."/>
            <person name="Land M."/>
            <person name="Kyrpides N."/>
            <person name="Ivanova N."/>
            <person name="Fredrickson J."/>
            <person name="Balkwill D."/>
            <person name="Romine M.F."/>
            <person name="Richardson P."/>
        </authorList>
    </citation>
    <scope>NUCLEOTIDE SEQUENCE [LARGE SCALE GENOMIC DNA]</scope>
    <source>
        <strain>ATCC 700278 / DSM 12444 / CCUG 56034 / CIP 105152 / NBRC 16084 / F199</strain>
    </source>
</reference>
<dbReference type="EC" id="6.3.3.3" evidence="1"/>
<dbReference type="EMBL" id="CP000248">
    <property type="protein sequence ID" value="ABD25164.1"/>
    <property type="molecule type" value="Genomic_DNA"/>
</dbReference>
<dbReference type="RefSeq" id="WP_011444378.1">
    <property type="nucleotide sequence ID" value="NC_007794.1"/>
</dbReference>
<dbReference type="SMR" id="Q2GAF9"/>
<dbReference type="STRING" id="279238.Saro_0717"/>
<dbReference type="KEGG" id="nar:Saro_0717"/>
<dbReference type="eggNOG" id="COG0132">
    <property type="taxonomic scope" value="Bacteria"/>
</dbReference>
<dbReference type="HOGENOM" id="CLU_072551_2_0_5"/>
<dbReference type="UniPathway" id="UPA00078">
    <property type="reaction ID" value="UER00161"/>
</dbReference>
<dbReference type="Proteomes" id="UP000009134">
    <property type="component" value="Chromosome"/>
</dbReference>
<dbReference type="GO" id="GO:0005829">
    <property type="term" value="C:cytosol"/>
    <property type="evidence" value="ECO:0007669"/>
    <property type="project" value="TreeGrafter"/>
</dbReference>
<dbReference type="GO" id="GO:0005524">
    <property type="term" value="F:ATP binding"/>
    <property type="evidence" value="ECO:0007669"/>
    <property type="project" value="UniProtKB-UniRule"/>
</dbReference>
<dbReference type="GO" id="GO:0004141">
    <property type="term" value="F:dethiobiotin synthase activity"/>
    <property type="evidence" value="ECO:0007669"/>
    <property type="project" value="UniProtKB-UniRule"/>
</dbReference>
<dbReference type="GO" id="GO:0000287">
    <property type="term" value="F:magnesium ion binding"/>
    <property type="evidence" value="ECO:0007669"/>
    <property type="project" value="UniProtKB-UniRule"/>
</dbReference>
<dbReference type="GO" id="GO:0009102">
    <property type="term" value="P:biotin biosynthetic process"/>
    <property type="evidence" value="ECO:0007669"/>
    <property type="project" value="UniProtKB-UniRule"/>
</dbReference>
<dbReference type="CDD" id="cd03109">
    <property type="entry name" value="DTBS"/>
    <property type="match status" value="1"/>
</dbReference>
<dbReference type="Gene3D" id="3.40.50.300">
    <property type="entry name" value="P-loop containing nucleotide triphosphate hydrolases"/>
    <property type="match status" value="1"/>
</dbReference>
<dbReference type="HAMAP" id="MF_00336">
    <property type="entry name" value="BioD"/>
    <property type="match status" value="1"/>
</dbReference>
<dbReference type="InterPro" id="IPR004472">
    <property type="entry name" value="DTB_synth_BioD"/>
</dbReference>
<dbReference type="InterPro" id="IPR027417">
    <property type="entry name" value="P-loop_NTPase"/>
</dbReference>
<dbReference type="NCBIfam" id="TIGR00347">
    <property type="entry name" value="bioD"/>
    <property type="match status" value="1"/>
</dbReference>
<dbReference type="PANTHER" id="PTHR43210:SF2">
    <property type="entry name" value="ATP-DEPENDENT DETHIOBIOTIN SYNTHETASE BIOD 2"/>
    <property type="match status" value="1"/>
</dbReference>
<dbReference type="PANTHER" id="PTHR43210">
    <property type="entry name" value="DETHIOBIOTIN SYNTHETASE"/>
    <property type="match status" value="1"/>
</dbReference>
<dbReference type="Pfam" id="PF13500">
    <property type="entry name" value="AAA_26"/>
    <property type="match status" value="1"/>
</dbReference>
<dbReference type="PIRSF" id="PIRSF006755">
    <property type="entry name" value="DTB_synth"/>
    <property type="match status" value="1"/>
</dbReference>
<dbReference type="SUPFAM" id="SSF52540">
    <property type="entry name" value="P-loop containing nucleoside triphosphate hydrolases"/>
    <property type="match status" value="1"/>
</dbReference>
<protein>
    <recommendedName>
        <fullName evidence="1">ATP-dependent dethiobiotin synthetase BioD</fullName>
        <ecNumber evidence="1">6.3.3.3</ecNumber>
    </recommendedName>
    <alternativeName>
        <fullName evidence="1">DTB synthetase</fullName>
        <shortName evidence="1">DTBS</shortName>
    </alternativeName>
    <alternativeName>
        <fullName evidence="1">Dethiobiotin synthase</fullName>
    </alternativeName>
</protein>